<keyword id="KW-0687">Ribonucleoprotein</keyword>
<keyword id="KW-0689">Ribosomal protein</keyword>
<keyword id="KW-0694">RNA-binding</keyword>
<keyword id="KW-0699">rRNA-binding</keyword>
<dbReference type="EMBL" id="AE014074">
    <property type="protein sequence ID" value="AAM80443.1"/>
    <property type="molecule type" value="Genomic_DNA"/>
</dbReference>
<dbReference type="RefSeq" id="WP_002991410.1">
    <property type="nucleotide sequence ID" value="NC_004070.1"/>
</dbReference>
<dbReference type="SMR" id="P0DE60"/>
<dbReference type="GeneID" id="69901603"/>
<dbReference type="KEGG" id="spg:SpyM3_1836"/>
<dbReference type="HOGENOM" id="CLU_078938_3_2_9"/>
<dbReference type="Proteomes" id="UP000000564">
    <property type="component" value="Chromosome"/>
</dbReference>
<dbReference type="GO" id="GO:1990904">
    <property type="term" value="C:ribonucleoprotein complex"/>
    <property type="evidence" value="ECO:0007669"/>
    <property type="project" value="UniProtKB-KW"/>
</dbReference>
<dbReference type="GO" id="GO:0005840">
    <property type="term" value="C:ribosome"/>
    <property type="evidence" value="ECO:0007669"/>
    <property type="project" value="UniProtKB-KW"/>
</dbReference>
<dbReference type="GO" id="GO:0019843">
    <property type="term" value="F:rRNA binding"/>
    <property type="evidence" value="ECO:0007669"/>
    <property type="project" value="UniProtKB-UniRule"/>
</dbReference>
<dbReference type="GO" id="GO:0003735">
    <property type="term" value="F:structural constituent of ribosome"/>
    <property type="evidence" value="ECO:0007669"/>
    <property type="project" value="InterPro"/>
</dbReference>
<dbReference type="GO" id="GO:0006412">
    <property type="term" value="P:translation"/>
    <property type="evidence" value="ECO:0007669"/>
    <property type="project" value="UniProtKB-UniRule"/>
</dbReference>
<dbReference type="FunFam" id="3.40.5.10:FF:000002">
    <property type="entry name" value="50S ribosomal protein L9"/>
    <property type="match status" value="1"/>
</dbReference>
<dbReference type="Gene3D" id="3.10.430.100">
    <property type="entry name" value="Ribosomal protein L9, C-terminal domain"/>
    <property type="match status" value="1"/>
</dbReference>
<dbReference type="Gene3D" id="3.40.5.10">
    <property type="entry name" value="Ribosomal protein L9, N-terminal domain"/>
    <property type="match status" value="1"/>
</dbReference>
<dbReference type="HAMAP" id="MF_00503">
    <property type="entry name" value="Ribosomal_bL9"/>
    <property type="match status" value="1"/>
</dbReference>
<dbReference type="InterPro" id="IPR000244">
    <property type="entry name" value="Ribosomal_bL9"/>
</dbReference>
<dbReference type="InterPro" id="IPR009027">
    <property type="entry name" value="Ribosomal_bL9/RNase_H1_N"/>
</dbReference>
<dbReference type="InterPro" id="IPR020594">
    <property type="entry name" value="Ribosomal_bL9_bac/chp"/>
</dbReference>
<dbReference type="InterPro" id="IPR020069">
    <property type="entry name" value="Ribosomal_bL9_C"/>
</dbReference>
<dbReference type="InterPro" id="IPR036791">
    <property type="entry name" value="Ribosomal_bL9_C_sf"/>
</dbReference>
<dbReference type="InterPro" id="IPR020070">
    <property type="entry name" value="Ribosomal_bL9_N"/>
</dbReference>
<dbReference type="InterPro" id="IPR036935">
    <property type="entry name" value="Ribosomal_bL9_N_sf"/>
</dbReference>
<dbReference type="NCBIfam" id="TIGR00158">
    <property type="entry name" value="L9"/>
    <property type="match status" value="1"/>
</dbReference>
<dbReference type="PANTHER" id="PTHR21368">
    <property type="entry name" value="50S RIBOSOMAL PROTEIN L9"/>
    <property type="match status" value="1"/>
</dbReference>
<dbReference type="Pfam" id="PF03948">
    <property type="entry name" value="Ribosomal_L9_C"/>
    <property type="match status" value="1"/>
</dbReference>
<dbReference type="Pfam" id="PF01281">
    <property type="entry name" value="Ribosomal_L9_N"/>
    <property type="match status" value="1"/>
</dbReference>
<dbReference type="SUPFAM" id="SSF55658">
    <property type="entry name" value="L9 N-domain-like"/>
    <property type="match status" value="1"/>
</dbReference>
<dbReference type="SUPFAM" id="SSF55653">
    <property type="entry name" value="Ribosomal protein L9 C-domain"/>
    <property type="match status" value="1"/>
</dbReference>
<dbReference type="PROSITE" id="PS00651">
    <property type="entry name" value="RIBOSOMAL_L9"/>
    <property type="match status" value="1"/>
</dbReference>
<feature type="chain" id="PRO_0000176689" description="Large ribosomal subunit protein bL9">
    <location>
        <begin position="1"/>
        <end position="150"/>
    </location>
</feature>
<comment type="function">
    <text evidence="1">Binds to the 23S rRNA.</text>
</comment>
<comment type="similarity">
    <text evidence="1">Belongs to the bacterial ribosomal protein bL9 family.</text>
</comment>
<reference key="1">
    <citation type="journal article" date="2002" name="Proc. Natl. Acad. Sci. U.S.A.">
        <title>Genome sequence of a serotype M3 strain of group A Streptococcus: phage-encoded toxins, the high-virulence phenotype, and clone emergence.</title>
        <authorList>
            <person name="Beres S.B."/>
            <person name="Sylva G.L."/>
            <person name="Barbian K.D."/>
            <person name="Lei B."/>
            <person name="Hoff J.S."/>
            <person name="Mammarella N.D."/>
            <person name="Liu M.-Y."/>
            <person name="Smoot J.C."/>
            <person name="Porcella S.F."/>
            <person name="Parkins L.D."/>
            <person name="Campbell D.S."/>
            <person name="Smith T.M."/>
            <person name="McCormick J.K."/>
            <person name="Leung D.Y.M."/>
            <person name="Schlievert P.M."/>
            <person name="Musser J.M."/>
        </authorList>
    </citation>
    <scope>NUCLEOTIDE SEQUENCE [LARGE SCALE GENOMIC DNA]</scope>
    <source>
        <strain>ATCC BAA-595 / MGAS315</strain>
    </source>
</reference>
<gene>
    <name evidence="1" type="primary">rplI</name>
    <name type="ordered locus">SpyM3_1836</name>
</gene>
<proteinExistence type="inferred from homology"/>
<organism>
    <name type="scientific">Streptococcus pyogenes serotype M3 (strain ATCC BAA-595 / MGAS315)</name>
    <dbReference type="NCBI Taxonomy" id="198466"/>
    <lineage>
        <taxon>Bacteria</taxon>
        <taxon>Bacillati</taxon>
        <taxon>Bacillota</taxon>
        <taxon>Bacilli</taxon>
        <taxon>Lactobacillales</taxon>
        <taxon>Streptococcaceae</taxon>
        <taxon>Streptococcus</taxon>
    </lineage>
</organism>
<protein>
    <recommendedName>
        <fullName evidence="1">Large ribosomal subunit protein bL9</fullName>
    </recommendedName>
    <alternativeName>
        <fullName evidence="2">50S ribosomal protein L9</fullName>
    </alternativeName>
</protein>
<sequence>MKVIFLADVKGKGKKGEIKEVPTGYAQNFLIKKNLAKEATSQSIGELKGKQKAEEKAQAEILAEAQAVKAVLDEDKTRVQFQEKVGPDGRTFGSITAKKISEELQKQFGVKVDKRHIVLDHPIRAIGLIEVPVKLHKEVTAEIKLAITEA</sequence>
<name>RL9_STRP3</name>
<accession>P0DE60</accession>
<accession>P66323</accession>
<accession>Q99XJ0</accession>
<evidence type="ECO:0000255" key="1">
    <source>
        <dbReference type="HAMAP-Rule" id="MF_00503"/>
    </source>
</evidence>
<evidence type="ECO:0000305" key="2"/>